<comment type="function">
    <text evidence="1">Peptide chain release factor 2 directs the termination of translation in response to the peptide chain termination codons UGA and UAA.</text>
</comment>
<comment type="subcellular location">
    <subcellularLocation>
        <location evidence="1">Cytoplasm</location>
    </subcellularLocation>
</comment>
<comment type="PTM">
    <text evidence="1">Methylated by PrmC. Methylation increases the termination efficiency of RF2.</text>
</comment>
<comment type="similarity">
    <text evidence="1">Belongs to the prokaryotic/mitochondrial release factor family.</text>
</comment>
<evidence type="ECO:0000255" key="1">
    <source>
        <dbReference type="HAMAP-Rule" id="MF_00094"/>
    </source>
</evidence>
<organism>
    <name type="scientific">Wolinella succinogenes (strain ATCC 29543 / DSM 1740 / CCUG 13145 / JCM 31913 / LMG 7466 / NCTC 11488 / FDC 602W)</name>
    <name type="common">Vibrio succinogenes</name>
    <dbReference type="NCBI Taxonomy" id="273121"/>
    <lineage>
        <taxon>Bacteria</taxon>
        <taxon>Pseudomonadati</taxon>
        <taxon>Campylobacterota</taxon>
        <taxon>Epsilonproteobacteria</taxon>
        <taxon>Campylobacterales</taxon>
        <taxon>Helicobacteraceae</taxon>
        <taxon>Wolinella</taxon>
    </lineage>
</organism>
<accession>Q7MAP4</accession>
<dbReference type="EMBL" id="BX571657">
    <property type="protein sequence ID" value="CAE09277.1"/>
    <property type="molecule type" value="Genomic_DNA"/>
</dbReference>
<dbReference type="RefSeq" id="WP_011138077.1">
    <property type="nucleotide sequence ID" value="NC_005090.1"/>
</dbReference>
<dbReference type="SMR" id="Q7MAP4"/>
<dbReference type="STRING" id="273121.WS0111"/>
<dbReference type="KEGG" id="wsu:WS0111"/>
<dbReference type="eggNOG" id="COG1186">
    <property type="taxonomic scope" value="Bacteria"/>
</dbReference>
<dbReference type="HOGENOM" id="CLU_036856_6_0_7"/>
<dbReference type="Proteomes" id="UP000000422">
    <property type="component" value="Chromosome"/>
</dbReference>
<dbReference type="GO" id="GO:0005737">
    <property type="term" value="C:cytoplasm"/>
    <property type="evidence" value="ECO:0007669"/>
    <property type="project" value="UniProtKB-SubCell"/>
</dbReference>
<dbReference type="GO" id="GO:0016149">
    <property type="term" value="F:translation release factor activity, codon specific"/>
    <property type="evidence" value="ECO:0007669"/>
    <property type="project" value="UniProtKB-UniRule"/>
</dbReference>
<dbReference type="FunFam" id="3.30.160.20:FF:000010">
    <property type="entry name" value="Peptide chain release factor 2"/>
    <property type="match status" value="1"/>
</dbReference>
<dbReference type="Gene3D" id="3.30.160.20">
    <property type="match status" value="1"/>
</dbReference>
<dbReference type="Gene3D" id="3.30.70.1660">
    <property type="match status" value="1"/>
</dbReference>
<dbReference type="Gene3D" id="1.20.58.410">
    <property type="entry name" value="Release factor"/>
    <property type="match status" value="1"/>
</dbReference>
<dbReference type="HAMAP" id="MF_00094">
    <property type="entry name" value="Rel_fac_2"/>
    <property type="match status" value="1"/>
</dbReference>
<dbReference type="InterPro" id="IPR005139">
    <property type="entry name" value="PCRF"/>
</dbReference>
<dbReference type="InterPro" id="IPR000352">
    <property type="entry name" value="Pep_chain_release_fac_I"/>
</dbReference>
<dbReference type="InterPro" id="IPR045853">
    <property type="entry name" value="Pep_chain_release_fac_I_sf"/>
</dbReference>
<dbReference type="InterPro" id="IPR004374">
    <property type="entry name" value="PrfB"/>
</dbReference>
<dbReference type="NCBIfam" id="TIGR00020">
    <property type="entry name" value="prfB"/>
    <property type="match status" value="1"/>
</dbReference>
<dbReference type="PANTHER" id="PTHR43116:SF3">
    <property type="entry name" value="CLASS I PEPTIDE CHAIN RELEASE FACTOR"/>
    <property type="match status" value="1"/>
</dbReference>
<dbReference type="PANTHER" id="PTHR43116">
    <property type="entry name" value="PEPTIDE CHAIN RELEASE FACTOR 2"/>
    <property type="match status" value="1"/>
</dbReference>
<dbReference type="Pfam" id="PF03462">
    <property type="entry name" value="PCRF"/>
    <property type="match status" value="1"/>
</dbReference>
<dbReference type="Pfam" id="PF00472">
    <property type="entry name" value="RF-1"/>
    <property type="match status" value="1"/>
</dbReference>
<dbReference type="SMART" id="SM00937">
    <property type="entry name" value="PCRF"/>
    <property type="match status" value="1"/>
</dbReference>
<dbReference type="SUPFAM" id="SSF75620">
    <property type="entry name" value="Release factor"/>
    <property type="match status" value="1"/>
</dbReference>
<dbReference type="PROSITE" id="PS00745">
    <property type="entry name" value="RF_PROK_I"/>
    <property type="match status" value="1"/>
</dbReference>
<protein>
    <recommendedName>
        <fullName evidence="1">Peptide chain release factor 2</fullName>
        <shortName evidence="1">RF-2</shortName>
    </recommendedName>
</protein>
<keyword id="KW-0963">Cytoplasm</keyword>
<keyword id="KW-0488">Methylation</keyword>
<keyword id="KW-0648">Protein biosynthesis</keyword>
<keyword id="KW-1185">Reference proteome</keyword>
<proteinExistence type="inferred from homology"/>
<sequence>MDSYEYGELLKELSTKRDNIAKIIKPDSIENRLGEIEALEHSEGFWNDATKAGEVQKEKRKLERILKKYEEANQAINDAKELFEIATQDNDEETLGLLFEESGHLEKEIKSVEIEVMLSGEHDGSNAIITIHPGAGGTESQDWASILYRMYLRWAERRGFKVEVLDYQEGEEAGIKDASFIIKGENAYGYLKVENGIHRLVRISPFDANAKRHTSFTSVMVSPEVDDDIDIEIEEKDLRLDTYRASGAGGQHVNKTESAIRITHIPTGIVVQCQNDRSQHKNKATAFKMLKSRLYELELAKRSAEYDSMEKSEIGWGHQIRSYVLAPYQQVKDTRSNIAYSNIEAILDGDLDELLEGVLISQFDQPGE</sequence>
<gene>
    <name evidence="1" type="primary">prfB</name>
    <name type="ordered locus">WS0111</name>
</gene>
<name>RF2_WOLSU</name>
<reference key="1">
    <citation type="journal article" date="2003" name="Proc. Natl. Acad. Sci. U.S.A.">
        <title>Complete genome sequence and analysis of Wolinella succinogenes.</title>
        <authorList>
            <person name="Baar C."/>
            <person name="Eppinger M."/>
            <person name="Raddatz G."/>
            <person name="Simon J."/>
            <person name="Lanz C."/>
            <person name="Klimmek O."/>
            <person name="Nandakumar R."/>
            <person name="Gross R."/>
            <person name="Rosinus A."/>
            <person name="Keller H."/>
            <person name="Jagtap P."/>
            <person name="Linke B."/>
            <person name="Meyer F."/>
            <person name="Lederer H."/>
            <person name="Schuster S.C."/>
        </authorList>
    </citation>
    <scope>NUCLEOTIDE SEQUENCE [LARGE SCALE GENOMIC DNA]</scope>
    <source>
        <strain>ATCC 29543 / DSM 1740 / CCUG 13145 / JCM 31913 / LMG 7466 / NCTC 11488 / FDC 602W</strain>
    </source>
</reference>
<feature type="chain" id="PRO_1000005021" description="Peptide chain release factor 2">
    <location>
        <begin position="1"/>
        <end position="368"/>
    </location>
</feature>
<feature type="modified residue" description="N5-methylglutamine" evidence="1">
    <location>
        <position position="251"/>
    </location>
</feature>